<name>RNFE_SHESA</name>
<organism>
    <name type="scientific">Shewanella sp. (strain ANA-3)</name>
    <dbReference type="NCBI Taxonomy" id="94122"/>
    <lineage>
        <taxon>Bacteria</taxon>
        <taxon>Pseudomonadati</taxon>
        <taxon>Pseudomonadota</taxon>
        <taxon>Gammaproteobacteria</taxon>
        <taxon>Alteromonadales</taxon>
        <taxon>Shewanellaceae</taxon>
        <taxon>Shewanella</taxon>
    </lineage>
</organism>
<dbReference type="EC" id="7.-.-.-" evidence="1"/>
<dbReference type="EMBL" id="CP000469">
    <property type="protein sequence ID" value="ABK48403.1"/>
    <property type="molecule type" value="Genomic_DNA"/>
</dbReference>
<dbReference type="RefSeq" id="WP_011717126.1">
    <property type="nucleotide sequence ID" value="NC_008577.1"/>
</dbReference>
<dbReference type="SMR" id="A0KX84"/>
<dbReference type="STRING" id="94122.Shewana3_2173"/>
<dbReference type="KEGG" id="shn:Shewana3_2173"/>
<dbReference type="eggNOG" id="COG4660">
    <property type="taxonomic scope" value="Bacteria"/>
</dbReference>
<dbReference type="HOGENOM" id="CLU_046659_1_0_6"/>
<dbReference type="OrthoDB" id="9782945at2"/>
<dbReference type="Proteomes" id="UP000002589">
    <property type="component" value="Chromosome"/>
</dbReference>
<dbReference type="GO" id="GO:0005886">
    <property type="term" value="C:plasma membrane"/>
    <property type="evidence" value="ECO:0007669"/>
    <property type="project" value="UniProtKB-SubCell"/>
</dbReference>
<dbReference type="GO" id="GO:0022900">
    <property type="term" value="P:electron transport chain"/>
    <property type="evidence" value="ECO:0007669"/>
    <property type="project" value="UniProtKB-UniRule"/>
</dbReference>
<dbReference type="HAMAP" id="MF_00478">
    <property type="entry name" value="RsxE_RnfE"/>
    <property type="match status" value="1"/>
</dbReference>
<dbReference type="InterPro" id="IPR003667">
    <property type="entry name" value="NqrDE/RnfAE"/>
</dbReference>
<dbReference type="InterPro" id="IPR010968">
    <property type="entry name" value="RnfE"/>
</dbReference>
<dbReference type="NCBIfam" id="NF009070">
    <property type="entry name" value="PRK12405.1"/>
    <property type="match status" value="1"/>
</dbReference>
<dbReference type="NCBIfam" id="TIGR01948">
    <property type="entry name" value="rnfE"/>
    <property type="match status" value="1"/>
</dbReference>
<dbReference type="PANTHER" id="PTHR30586">
    <property type="entry name" value="ELECTRON TRANSPORT COMPLEX PROTEIN RNFE"/>
    <property type="match status" value="1"/>
</dbReference>
<dbReference type="PANTHER" id="PTHR30586:SF0">
    <property type="entry name" value="ION-TRANSLOCATING OXIDOREDUCTASE COMPLEX SUBUNIT E"/>
    <property type="match status" value="1"/>
</dbReference>
<dbReference type="Pfam" id="PF02508">
    <property type="entry name" value="Rnf-Nqr"/>
    <property type="match status" value="1"/>
</dbReference>
<dbReference type="PIRSF" id="PIRSF006102">
    <property type="entry name" value="NQR_DE"/>
    <property type="match status" value="1"/>
</dbReference>
<sequence length="232" mass="24988">MTNYREIAWQGLWKNNPGLVQLLGLCPLLAVTATLTNALGLGVATMLVLIGSNILVSLVRDYVPKEIRIPVFVMIIAALVTAVQLLINAYAYGLYLSLGIFLPLIVTNCIIIGRAEAFASRNNAFSAAFDGLMMGLGFTLVLAVLGATREILGQGTLFDGADQLLGPWAKALTIQVWQVDTPFLLAMLPPGAFIVMGLLIALKNVIDKKLKERQPEVAVQPSVTRARITKVS</sequence>
<protein>
    <recommendedName>
        <fullName evidence="1">Ion-translocating oxidoreductase complex subunit E</fullName>
        <ecNumber evidence="1">7.-.-.-</ecNumber>
    </recommendedName>
    <alternativeName>
        <fullName evidence="1">Rnf electron transport complex subunit E</fullName>
    </alternativeName>
</protein>
<accession>A0KX84</accession>
<reference key="1">
    <citation type="submission" date="2006-09" db="EMBL/GenBank/DDBJ databases">
        <title>Complete sequence of chromosome 1 of Shewanella sp. ANA-3.</title>
        <authorList>
            <person name="Copeland A."/>
            <person name="Lucas S."/>
            <person name="Lapidus A."/>
            <person name="Barry K."/>
            <person name="Detter J.C."/>
            <person name="Glavina del Rio T."/>
            <person name="Hammon N."/>
            <person name="Israni S."/>
            <person name="Dalin E."/>
            <person name="Tice H."/>
            <person name="Pitluck S."/>
            <person name="Chertkov O."/>
            <person name="Brettin T."/>
            <person name="Bruce D."/>
            <person name="Han C."/>
            <person name="Tapia R."/>
            <person name="Gilna P."/>
            <person name="Schmutz J."/>
            <person name="Larimer F."/>
            <person name="Land M."/>
            <person name="Hauser L."/>
            <person name="Kyrpides N."/>
            <person name="Kim E."/>
            <person name="Newman D."/>
            <person name="Salticov C."/>
            <person name="Konstantinidis K."/>
            <person name="Klappenback J."/>
            <person name="Tiedje J."/>
            <person name="Richardson P."/>
        </authorList>
    </citation>
    <scope>NUCLEOTIDE SEQUENCE [LARGE SCALE GENOMIC DNA]</scope>
    <source>
        <strain>ANA-3</strain>
    </source>
</reference>
<keyword id="KW-0997">Cell inner membrane</keyword>
<keyword id="KW-1003">Cell membrane</keyword>
<keyword id="KW-0249">Electron transport</keyword>
<keyword id="KW-0472">Membrane</keyword>
<keyword id="KW-1278">Translocase</keyword>
<keyword id="KW-0812">Transmembrane</keyword>
<keyword id="KW-1133">Transmembrane helix</keyword>
<keyword id="KW-0813">Transport</keyword>
<evidence type="ECO:0000255" key="1">
    <source>
        <dbReference type="HAMAP-Rule" id="MF_00478"/>
    </source>
</evidence>
<comment type="function">
    <text evidence="1">Part of a membrane-bound complex that couples electron transfer with translocation of ions across the membrane.</text>
</comment>
<comment type="subunit">
    <text evidence="1">The complex is composed of six subunits: RnfA, RnfB, RnfC, RnfD, RnfE and RnfG.</text>
</comment>
<comment type="subcellular location">
    <subcellularLocation>
        <location evidence="1">Cell inner membrane</location>
        <topology evidence="1">Multi-pass membrane protein</topology>
    </subcellularLocation>
</comment>
<comment type="similarity">
    <text evidence="1">Belongs to the NqrDE/RnfAE family.</text>
</comment>
<gene>
    <name evidence="1" type="primary">rnfE</name>
    <name type="ordered locus">Shewana3_2173</name>
</gene>
<proteinExistence type="inferred from homology"/>
<feature type="chain" id="PRO_1000014105" description="Ion-translocating oxidoreductase complex subunit E">
    <location>
        <begin position="1"/>
        <end position="232"/>
    </location>
</feature>
<feature type="transmembrane region" description="Helical" evidence="1">
    <location>
        <begin position="18"/>
        <end position="38"/>
    </location>
</feature>
<feature type="transmembrane region" description="Helical" evidence="1">
    <location>
        <begin position="39"/>
        <end position="59"/>
    </location>
</feature>
<feature type="transmembrane region" description="Helical" evidence="1">
    <location>
        <begin position="69"/>
        <end position="89"/>
    </location>
</feature>
<feature type="transmembrane region" description="Helical" evidence="1">
    <location>
        <begin position="93"/>
        <end position="113"/>
    </location>
</feature>
<feature type="transmembrane region" description="Helical" evidence="1">
    <location>
        <begin position="127"/>
        <end position="147"/>
    </location>
</feature>
<feature type="transmembrane region" description="Helical" evidence="1">
    <location>
        <begin position="182"/>
        <end position="202"/>
    </location>
</feature>